<proteinExistence type="evidence at transcript level"/>
<name>S7A6O_DANRE</name>
<organism>
    <name type="scientific">Danio rerio</name>
    <name type="common">Zebrafish</name>
    <name type="synonym">Brachydanio rerio</name>
    <dbReference type="NCBI Taxonomy" id="7955"/>
    <lineage>
        <taxon>Eukaryota</taxon>
        <taxon>Metazoa</taxon>
        <taxon>Chordata</taxon>
        <taxon>Craniata</taxon>
        <taxon>Vertebrata</taxon>
        <taxon>Euteleostomi</taxon>
        <taxon>Actinopterygii</taxon>
        <taxon>Neopterygii</taxon>
        <taxon>Teleostei</taxon>
        <taxon>Ostariophysi</taxon>
        <taxon>Cypriniformes</taxon>
        <taxon>Danionidae</taxon>
        <taxon>Danioninae</taxon>
        <taxon>Danio</taxon>
    </lineage>
</organism>
<gene>
    <name type="primary">slc7a6os</name>
    <name type="ORF">zgc:103493</name>
</gene>
<dbReference type="EMBL" id="AB193555">
    <property type="protein sequence ID" value="BAD91396.1"/>
    <property type="molecule type" value="mRNA"/>
</dbReference>
<dbReference type="EMBL" id="BC085534">
    <property type="protein sequence ID" value="AAH85534.1"/>
    <property type="molecule type" value="mRNA"/>
</dbReference>
<dbReference type="SMR" id="Q5U3I2"/>
<dbReference type="FunCoup" id="Q5U3I2">
    <property type="interactions" value="1732"/>
</dbReference>
<dbReference type="STRING" id="7955.ENSDARP00000020840"/>
<dbReference type="PaxDb" id="7955-ENSDARP00000020840"/>
<dbReference type="AGR" id="ZFIN:ZDB-GENE-041114-32"/>
<dbReference type="ZFIN" id="ZDB-GENE-041114-32">
    <property type="gene designation" value="slc7a6os"/>
</dbReference>
<dbReference type="eggNOG" id="KOG4852">
    <property type="taxonomic scope" value="Eukaryota"/>
</dbReference>
<dbReference type="InParanoid" id="Q5U3I2"/>
<dbReference type="PhylomeDB" id="Q5U3I2"/>
<dbReference type="PRO" id="PR:Q5U3I2"/>
<dbReference type="Proteomes" id="UP000000437">
    <property type="component" value="Unplaced"/>
</dbReference>
<dbReference type="GO" id="GO:0005737">
    <property type="term" value="C:cytoplasm"/>
    <property type="evidence" value="ECO:0007669"/>
    <property type="project" value="UniProtKB-SubCell"/>
</dbReference>
<dbReference type="GO" id="GO:0005634">
    <property type="term" value="C:nucleus"/>
    <property type="evidence" value="ECO:0007669"/>
    <property type="project" value="UniProtKB-SubCell"/>
</dbReference>
<dbReference type="GO" id="GO:0007417">
    <property type="term" value="P:central nervous system development"/>
    <property type="evidence" value="ECO:0000315"/>
    <property type="project" value="ZFIN"/>
</dbReference>
<dbReference type="GO" id="GO:0032502">
    <property type="term" value="P:developmental process"/>
    <property type="evidence" value="ECO:0000318"/>
    <property type="project" value="GO_Central"/>
</dbReference>
<dbReference type="GO" id="GO:0021552">
    <property type="term" value="P:midbrain-hindbrain boundary structural organization"/>
    <property type="evidence" value="ECO:0000315"/>
    <property type="project" value="ZFIN"/>
</dbReference>
<dbReference type="GO" id="GO:0015031">
    <property type="term" value="P:protein transport"/>
    <property type="evidence" value="ECO:0007669"/>
    <property type="project" value="UniProtKB-KW"/>
</dbReference>
<dbReference type="GO" id="GO:0061053">
    <property type="term" value="P:somite development"/>
    <property type="evidence" value="ECO:0000315"/>
    <property type="project" value="ZFIN"/>
</dbReference>
<dbReference type="InterPro" id="IPR040218">
    <property type="entry name" value="SLC7A6OS"/>
</dbReference>
<dbReference type="InterPro" id="IPR013883">
    <property type="entry name" value="TF_Iwr1_dom"/>
</dbReference>
<dbReference type="PANTHER" id="PTHR31196">
    <property type="entry name" value="RNA POLYMERASE II NUCLEAR LOCALIZATION PROTEIN SLC7A6OS-RELATED"/>
    <property type="match status" value="1"/>
</dbReference>
<dbReference type="PANTHER" id="PTHR31196:SF2">
    <property type="entry name" value="RNA POLYMERASE II NUCLEAR LOCALIZATION PROTEIN SLC7A6OS-RELATED"/>
    <property type="match status" value="1"/>
</dbReference>
<dbReference type="Pfam" id="PF08574">
    <property type="entry name" value="Iwr1"/>
    <property type="match status" value="1"/>
</dbReference>
<protein>
    <recommendedName>
        <fullName>Probable RNA polymerase II nuclear localization protein SLC7A6OS</fullName>
    </recommendedName>
    <alternativeName>
        <fullName>Solute carrier family 7 member 6 opposite strand transcript homolog</fullName>
    </alternativeName>
</protein>
<reference key="1">
    <citation type="journal article" date="2005" name="Curr. Biol.">
        <title>The zebrafish-secreted matrix protein You/Scube2 is implicated in long-range regulation of hedgehog signaling.</title>
        <authorList>
            <person name="Kawakami A."/>
            <person name="Nojima Y."/>
            <person name="Toyoda A."/>
            <person name="Takahoko M."/>
            <person name="Satoh M."/>
            <person name="Tanaka H."/>
            <person name="Wada H."/>
            <person name="Masai I."/>
            <person name="Terasaki H."/>
            <person name="Sakaki Y."/>
            <person name="Takeda H."/>
            <person name="Okamoto H."/>
        </authorList>
    </citation>
    <scope>NUCLEOTIDE SEQUENCE [MRNA] (ISOFORM 2)</scope>
</reference>
<reference key="2">
    <citation type="submission" date="2004-11" db="EMBL/GenBank/DDBJ databases">
        <authorList>
            <consortium name="NIH - Zebrafish Gene Collection (ZGC) project"/>
        </authorList>
    </citation>
    <scope>NUCLEOTIDE SEQUENCE [LARGE SCALE MRNA] (ISOFORM 1)</scope>
    <source>
        <tissue>Ovary</tissue>
    </source>
</reference>
<feature type="chain" id="PRO_0000289171" description="Probable RNA polymerase II nuclear localization protein SLC7A6OS">
    <location>
        <begin position="1"/>
        <end position="326"/>
    </location>
</feature>
<feature type="region of interest" description="Disordered" evidence="2">
    <location>
        <begin position="30"/>
        <end position="52"/>
    </location>
</feature>
<feature type="region of interest" description="Disordered" evidence="2">
    <location>
        <begin position="120"/>
        <end position="147"/>
    </location>
</feature>
<feature type="region of interest" description="Disordered" evidence="2">
    <location>
        <begin position="252"/>
        <end position="297"/>
    </location>
</feature>
<feature type="region of interest" description="Disordered" evidence="2">
    <location>
        <begin position="307"/>
        <end position="326"/>
    </location>
</feature>
<feature type="compositionally biased region" description="Basic and acidic residues" evidence="2">
    <location>
        <begin position="136"/>
        <end position="147"/>
    </location>
</feature>
<feature type="compositionally biased region" description="Acidic residues" evidence="2">
    <location>
        <begin position="269"/>
        <end position="279"/>
    </location>
</feature>
<feature type="compositionally biased region" description="Basic and acidic residues" evidence="2">
    <location>
        <begin position="280"/>
        <end position="297"/>
    </location>
</feature>
<feature type="splice variant" id="VSP_025948" description="In isoform 2." evidence="3">
    <original>MDPSTTILRVKRKRGTDPADALLLACKRIRPEATAAQPSDESEPEPQEPKIENSVFKLVATVVS</original>
    <variation>MTNKMSCMLIVTDIIISSSVVLFNFHWLLQSYFGQLPL</variation>
    <location>
        <begin position="1"/>
        <end position="64"/>
    </location>
</feature>
<feature type="splice variant" id="VSP_025949" description="In isoform 2." evidence="3">
    <original>A</original>
    <variation>AGG</variation>
    <location>
        <position position="131"/>
    </location>
</feature>
<feature type="sequence conflict" description="In Ref. 1; BAD91396." evidence="4" ref="1">
    <original>A</original>
    <variation>T</variation>
    <location>
        <position position="143"/>
    </location>
</feature>
<feature type="sequence conflict" description="In Ref. 1; BAD91396." evidence="4" ref="1">
    <original>S</original>
    <variation>G</variation>
    <location>
        <position position="277"/>
    </location>
</feature>
<feature type="sequence conflict" description="In Ref. 1; BAD91396." evidence="4" ref="1">
    <original>R</original>
    <variation>W</variation>
    <location>
        <position position="298"/>
    </location>
</feature>
<accession>Q5U3I2</accession>
<accession>Q59I65</accession>
<keyword id="KW-0025">Alternative splicing</keyword>
<keyword id="KW-0963">Cytoplasm</keyword>
<keyword id="KW-0539">Nucleus</keyword>
<keyword id="KW-0653">Protein transport</keyword>
<keyword id="KW-1185">Reference proteome</keyword>
<keyword id="KW-0813">Transport</keyword>
<sequence length="326" mass="37039">MDPSTTILRVKRKRGTDPADALLLACKRIRPEATAAQPSDESEPEPQEPKIENSVFKLVATVVSQDAPVQPHVREALARPRLAHHALRPSQGSSQRIIGDLRSVKWSTRREERYRILSSHRAGLPSEPAPAGGGGEENHDSHAESRDGLPLGEVQVFDILHEEEDVKVPGKMVVSDPETILCNSVKMIREKLSVSGAGLGTEHREKEDDYVYDLYYQETATPGWIQDILSVRPYSQEGELVPDEVAWEEEVYEDEDDENAEANWRNDYPEESSEGDSEGEERYGGCWSEEHSYSRRSRECYRRDMIDELENDKDEDDEEREYNDSD</sequence>
<evidence type="ECO:0000250" key="1"/>
<evidence type="ECO:0000256" key="2">
    <source>
        <dbReference type="SAM" id="MobiDB-lite"/>
    </source>
</evidence>
<evidence type="ECO:0000303" key="3">
    <source>
    </source>
</evidence>
<evidence type="ECO:0000305" key="4"/>
<comment type="function">
    <text evidence="1">Directs RNA polymerase II nuclear import.</text>
</comment>
<comment type="subcellular location">
    <subcellularLocation>
        <location evidence="1">Cytoplasm</location>
    </subcellularLocation>
    <subcellularLocation>
        <location evidence="1">Nucleus</location>
    </subcellularLocation>
</comment>
<comment type="alternative products">
    <event type="alternative splicing"/>
    <isoform>
        <id>Q5U3I2-1</id>
        <name>1</name>
        <sequence type="displayed"/>
    </isoform>
    <isoform>
        <id>Q5U3I2-2</id>
        <name>2</name>
        <sequence type="described" ref="VSP_025948 VSP_025949"/>
    </isoform>
</comment>
<comment type="similarity">
    <text evidence="4">Belongs to the IWR1/SLC7A6OS family.</text>
</comment>